<proteinExistence type="inferred from homology"/>
<protein>
    <recommendedName>
        <fullName evidence="1">Protein YebF</fullName>
    </recommendedName>
</protein>
<dbReference type="EMBL" id="AE005174">
    <property type="protein sequence ID" value="AAG56837.1"/>
    <property type="status" value="ALT_INIT"/>
    <property type="molecule type" value="Genomic_DNA"/>
</dbReference>
<dbReference type="EMBL" id="BA000007">
    <property type="protein sequence ID" value="BAB35980.2"/>
    <property type="molecule type" value="Genomic_DNA"/>
</dbReference>
<dbReference type="PIR" id="A85797">
    <property type="entry name" value="A85797"/>
</dbReference>
<dbReference type="PIR" id="E90948">
    <property type="entry name" value="E90948"/>
</dbReference>
<dbReference type="RefSeq" id="NP_310584.1">
    <property type="nucleotide sequence ID" value="NC_002695.1"/>
</dbReference>
<dbReference type="RefSeq" id="WP_001295500.1">
    <property type="nucleotide sequence ID" value="NZ_VOAI01000010.1"/>
</dbReference>
<dbReference type="SMR" id="Q8XCK0"/>
<dbReference type="STRING" id="155864.Z2899"/>
<dbReference type="GeneID" id="914104"/>
<dbReference type="GeneID" id="93776114"/>
<dbReference type="KEGG" id="ece:Z2899"/>
<dbReference type="KEGG" id="ecs:ECs_2557"/>
<dbReference type="PATRIC" id="fig|386585.9.peg.2680"/>
<dbReference type="eggNOG" id="ENOG5031MN2">
    <property type="taxonomic scope" value="Bacteria"/>
</dbReference>
<dbReference type="HOGENOM" id="CLU_161319_1_0_6"/>
<dbReference type="OMA" id="FPKCEGM"/>
<dbReference type="Proteomes" id="UP000000558">
    <property type="component" value="Chromosome"/>
</dbReference>
<dbReference type="Proteomes" id="UP000002519">
    <property type="component" value="Chromosome"/>
</dbReference>
<dbReference type="GO" id="GO:0005576">
    <property type="term" value="C:extracellular region"/>
    <property type="evidence" value="ECO:0007669"/>
    <property type="project" value="UniProtKB-SubCell"/>
</dbReference>
<dbReference type="Gene3D" id="3.10.450.300">
    <property type="entry name" value="YebF/Colicin-M immunity protein"/>
    <property type="match status" value="1"/>
</dbReference>
<dbReference type="HAMAP" id="MF_01435">
    <property type="entry name" value="YebF"/>
    <property type="match status" value="1"/>
</dbReference>
<dbReference type="InterPro" id="IPR020236">
    <property type="entry name" value="Uncharacterised_YebF"/>
</dbReference>
<dbReference type="InterPro" id="IPR038703">
    <property type="entry name" value="YebF/Cmi_sf"/>
</dbReference>
<dbReference type="InterPro" id="IPR025603">
    <property type="entry name" value="YebF/ColM_immunity"/>
</dbReference>
<dbReference type="NCBIfam" id="NF010224">
    <property type="entry name" value="PRK13680.1"/>
    <property type="match status" value="1"/>
</dbReference>
<dbReference type="NCBIfam" id="NF041240">
    <property type="entry name" value="YebF_not_Cmi"/>
    <property type="match status" value="1"/>
</dbReference>
<dbReference type="Pfam" id="PF13995">
    <property type="entry name" value="YebF"/>
    <property type="match status" value="1"/>
</dbReference>
<dbReference type="PROSITE" id="PS51979">
    <property type="entry name" value="YEBF_CMI"/>
    <property type="match status" value="1"/>
</dbReference>
<sequence>MKKRGAFLGLLLVSACASVFAANNETSKSVTFPKCEGLDAAGIAASVKRDYQQNRVARWADDQKIVGQADPVAWVSLQDIQGKDDKWSVPLTVRGKSADIHYQVSVDCKAGMAEYQRR</sequence>
<name>YEBF_ECO57</name>
<evidence type="ECO:0000255" key="1">
    <source>
        <dbReference type="HAMAP-Rule" id="MF_01435"/>
    </source>
</evidence>
<evidence type="ECO:0000255" key="2">
    <source>
        <dbReference type="PROSITE-ProRule" id="PRU01323"/>
    </source>
</evidence>
<evidence type="ECO:0000305" key="3"/>
<feature type="signal peptide" evidence="1">
    <location>
        <begin position="1"/>
        <end position="21"/>
    </location>
</feature>
<feature type="chain" id="PRO_0000045947" description="Protein YebF">
    <location>
        <begin position="22"/>
        <end position="118"/>
    </location>
</feature>
<feature type="domain" description="YebF/Cmi" evidence="2">
    <location>
        <begin position="31"/>
        <end position="118"/>
    </location>
</feature>
<feature type="disulfide bond" evidence="2">
    <location>
        <begin position="35"/>
        <end position="108"/>
    </location>
</feature>
<comment type="subcellular location">
    <subcellularLocation>
        <location evidence="1">Secreted</location>
    </subcellularLocation>
</comment>
<comment type="similarity">
    <text evidence="1">Belongs to the YebF family.</text>
</comment>
<comment type="sequence caution" evidence="3">
    <conflict type="erroneous initiation">
        <sequence resource="EMBL-CDS" id="AAG56837"/>
    </conflict>
    <text>Extended N-terminus.</text>
</comment>
<reference key="1">
    <citation type="journal article" date="2001" name="Nature">
        <title>Genome sequence of enterohaemorrhagic Escherichia coli O157:H7.</title>
        <authorList>
            <person name="Perna N.T."/>
            <person name="Plunkett G. III"/>
            <person name="Burland V."/>
            <person name="Mau B."/>
            <person name="Glasner J.D."/>
            <person name="Rose D.J."/>
            <person name="Mayhew G.F."/>
            <person name="Evans P.S."/>
            <person name="Gregor J."/>
            <person name="Kirkpatrick H.A."/>
            <person name="Posfai G."/>
            <person name="Hackett J."/>
            <person name="Klink S."/>
            <person name="Boutin A."/>
            <person name="Shao Y."/>
            <person name="Miller L."/>
            <person name="Grotbeck E.J."/>
            <person name="Davis N.W."/>
            <person name="Lim A."/>
            <person name="Dimalanta E.T."/>
            <person name="Potamousis K."/>
            <person name="Apodaca J."/>
            <person name="Anantharaman T.S."/>
            <person name="Lin J."/>
            <person name="Yen G."/>
            <person name="Schwartz D.C."/>
            <person name="Welch R.A."/>
            <person name="Blattner F.R."/>
        </authorList>
    </citation>
    <scope>NUCLEOTIDE SEQUENCE [LARGE SCALE GENOMIC DNA]</scope>
    <source>
        <strain>O157:H7 / EDL933 / ATCC 700927 / EHEC</strain>
    </source>
</reference>
<reference key="2">
    <citation type="journal article" date="2001" name="DNA Res.">
        <title>Complete genome sequence of enterohemorrhagic Escherichia coli O157:H7 and genomic comparison with a laboratory strain K-12.</title>
        <authorList>
            <person name="Hayashi T."/>
            <person name="Makino K."/>
            <person name="Ohnishi M."/>
            <person name="Kurokawa K."/>
            <person name="Ishii K."/>
            <person name="Yokoyama K."/>
            <person name="Han C.-G."/>
            <person name="Ohtsubo E."/>
            <person name="Nakayama K."/>
            <person name="Murata T."/>
            <person name="Tanaka M."/>
            <person name="Tobe T."/>
            <person name="Iida T."/>
            <person name="Takami H."/>
            <person name="Honda T."/>
            <person name="Sasakawa C."/>
            <person name="Ogasawara N."/>
            <person name="Yasunaga T."/>
            <person name="Kuhara S."/>
            <person name="Shiba T."/>
            <person name="Hattori M."/>
            <person name="Shinagawa H."/>
        </authorList>
    </citation>
    <scope>NUCLEOTIDE SEQUENCE [LARGE SCALE GENOMIC DNA]</scope>
    <source>
        <strain>O157:H7 / Sakai / RIMD 0509952 / EHEC</strain>
    </source>
</reference>
<keyword id="KW-1015">Disulfide bond</keyword>
<keyword id="KW-1185">Reference proteome</keyword>
<keyword id="KW-0964">Secreted</keyword>
<keyword id="KW-0732">Signal</keyword>
<organism>
    <name type="scientific">Escherichia coli O157:H7</name>
    <dbReference type="NCBI Taxonomy" id="83334"/>
    <lineage>
        <taxon>Bacteria</taxon>
        <taxon>Pseudomonadati</taxon>
        <taxon>Pseudomonadota</taxon>
        <taxon>Gammaproteobacteria</taxon>
        <taxon>Enterobacterales</taxon>
        <taxon>Enterobacteriaceae</taxon>
        <taxon>Escherichia</taxon>
    </lineage>
</organism>
<accession>Q8XCK0</accession>
<accession>Q7AD73</accession>
<gene>
    <name evidence="1" type="primary">yebF</name>
    <name type="ordered locus">Z2899</name>
    <name type="ordered locus">ECs2557</name>
</gene>